<organism>
    <name type="scientific">African swine fever virus (isolate Pig/Kenya/KEN-50/1950)</name>
    <name type="common">ASFV</name>
    <dbReference type="NCBI Taxonomy" id="561445"/>
    <lineage>
        <taxon>Viruses</taxon>
        <taxon>Varidnaviria</taxon>
        <taxon>Bamfordvirae</taxon>
        <taxon>Nucleocytoviricota</taxon>
        <taxon>Pokkesviricetes</taxon>
        <taxon>Asfuvirales</taxon>
        <taxon>Asfarviridae</taxon>
        <taxon>Asfivirus</taxon>
        <taxon>African swine fever virus</taxon>
    </lineage>
</organism>
<organismHost>
    <name type="scientific">Ornithodoros</name>
    <name type="common">relapsing fever ticks</name>
    <dbReference type="NCBI Taxonomy" id="6937"/>
</organismHost>
<organismHost>
    <name type="scientific">Phacochoerus aethiopicus</name>
    <name type="common">Warthog</name>
    <dbReference type="NCBI Taxonomy" id="85517"/>
</organismHost>
<organismHost>
    <name type="scientific">Phacochoerus africanus</name>
    <name type="common">Warthog</name>
    <dbReference type="NCBI Taxonomy" id="41426"/>
</organismHost>
<organismHost>
    <name type="scientific">Potamochoerus larvatus</name>
    <name type="common">Bushpig</name>
    <dbReference type="NCBI Taxonomy" id="273792"/>
</organismHost>
<organismHost>
    <name type="scientific">Sus scrofa</name>
    <name type="common">Pig</name>
    <dbReference type="NCBI Taxonomy" id="9823"/>
</organismHost>
<accession>P0CAI0</accession>
<sequence>MAEFNIDELLKNVLEDPSTEISEETLKQLYQKTNPYKQFKNDSRVAFCSFTNLREQYIRRLIMTSFIGYVFKALQEWMPSYSKPTHTTKTLLSELITLVDTLKQETNDVPSESVVNTLLSIADNCKTQTQKSTEAKTTIDSFLREHFVFDPNLHAQSAYTCASTCASTCASTCASTCADTNVDTCTDTCASTCADTNVDTCASTCADTCASTEYTDLMDPERIPLHIMQKTLNVPNELQADIDAITQTRQGYRAAAHILQNIELHQSIKHMLENPKAFKPILFNTKITRYLSQHIPPQDTFYKWNYYIEDNYEELRAATESIYPEKPDLEFAFIIYDVVDSSSNQQKIDEFYYKYKDQIFSEVSSIQLGNWTLLGSFKANRERYNYFNQNNEIIKRILDRHEEDLKIGKEILRNTIYHKKAKNIQETGPDAPGLSIYNSTFHTDSGIKGLLSFKELKNLEKASGNIKKAREYDFIDDCEEKIKQLLSKENLTPDEKSQLEKTKKQLENALEMLNVPDDTIRVDMWVNNNNKLEKEILYTKAEL</sequence>
<evidence type="ECO:0000250" key="1">
    <source>
        <dbReference type="UniProtKB" id="Q65169"/>
    </source>
</evidence>
<evidence type="ECO:0000305" key="2"/>
<proteinExistence type="inferred from homology"/>
<protein>
    <recommendedName>
        <fullName>Protein B602L</fullName>
        <shortName>pB602L</shortName>
    </recommendedName>
</protein>
<keyword id="KW-1035">Host cytoplasm</keyword>
<keyword id="KW-0426">Late protein</keyword>
<keyword id="KW-0677">Repeat</keyword>
<feature type="chain" id="PRO_0000373701" description="Protein B602L">
    <location>
        <begin position="1"/>
        <end position="543"/>
    </location>
</feature>
<feature type="repeat" description="1">
    <location>
        <begin position="161"/>
        <end position="164"/>
    </location>
</feature>
<feature type="repeat" description="2">
    <location>
        <begin position="165"/>
        <end position="168"/>
    </location>
</feature>
<feature type="repeat" description="3">
    <location>
        <begin position="169"/>
        <end position="172"/>
    </location>
</feature>
<feature type="repeat" description="4">
    <location>
        <begin position="173"/>
        <end position="176"/>
    </location>
</feature>
<feature type="repeat" description="5">
    <location>
        <begin position="177"/>
        <end position="180"/>
    </location>
</feature>
<feature type="repeat" description="6">
    <location>
        <begin position="181"/>
        <end position="184"/>
    </location>
</feature>
<feature type="repeat" description="7">
    <location>
        <begin position="185"/>
        <end position="188"/>
    </location>
</feature>
<feature type="repeat" description="8">
    <location>
        <begin position="189"/>
        <end position="192"/>
    </location>
</feature>
<feature type="repeat" description="9">
    <location>
        <begin position="193"/>
        <end position="196"/>
    </location>
</feature>
<feature type="repeat" description="10">
    <location>
        <begin position="197"/>
        <end position="200"/>
    </location>
</feature>
<feature type="repeat" description="11">
    <location>
        <begin position="201"/>
        <end position="204"/>
    </location>
</feature>
<feature type="repeat" description="12">
    <location>
        <begin position="205"/>
        <end position="208"/>
    </location>
</feature>
<feature type="repeat" description="13">
    <location>
        <begin position="209"/>
        <end position="212"/>
    </location>
</feature>
<feature type="region of interest" description="13 X 4 AA tandem repeats of [CN]-[ATV]-[DS]-T">
    <location>
        <begin position="161"/>
        <end position="212"/>
    </location>
</feature>
<gene>
    <name type="ordered locus">Ken-091</name>
</gene>
<reference key="1">
    <citation type="submission" date="2003-03" db="EMBL/GenBank/DDBJ databases">
        <title>African swine fever virus genomes.</title>
        <authorList>
            <person name="Kutish G.F."/>
            <person name="Rock D.L."/>
        </authorList>
    </citation>
    <scope>NUCLEOTIDE SEQUENCE [LARGE SCALE GENOMIC DNA]</scope>
</reference>
<comment type="function">
    <text evidence="1">Plays an essential role in the assembly of the icosahedral capsid of the virus (By similarity). Allows the assembly of 3 molecules of hexon protein p72 and formation of a thermostable trimer (By similarity).</text>
</comment>
<comment type="subcellular location">
    <subcellularLocation>
        <location evidence="1">Host cytoplasm</location>
    </subcellularLocation>
</comment>
<comment type="induction">
    <text evidence="2">Expressed in the late phase of the viral replicative cycle.</text>
</comment>
<comment type="similarity">
    <text evidence="2">Belongs to the asfivirus B602L family.</text>
</comment>
<name>VF602_ASFK5</name>
<dbReference type="EMBL" id="AY261360">
    <property type="status" value="NOT_ANNOTATED_CDS"/>
    <property type="molecule type" value="Genomic_DNA"/>
</dbReference>
<dbReference type="SMR" id="P0CAI0"/>
<dbReference type="Proteomes" id="UP000000861">
    <property type="component" value="Segment"/>
</dbReference>
<dbReference type="GO" id="GO:0030430">
    <property type="term" value="C:host cell cytoplasm"/>
    <property type="evidence" value="ECO:0007669"/>
    <property type="project" value="UniProtKB-SubCell"/>
</dbReference>
<dbReference type="CDD" id="cd19941">
    <property type="entry name" value="TIL"/>
    <property type="match status" value="1"/>
</dbReference>